<name>MIAA_SHESM</name>
<dbReference type="EC" id="2.5.1.75" evidence="1"/>
<dbReference type="EMBL" id="CP000446">
    <property type="protein sequence ID" value="ABI37677.1"/>
    <property type="molecule type" value="Genomic_DNA"/>
</dbReference>
<dbReference type="SMR" id="Q0HMP0"/>
<dbReference type="KEGG" id="she:Shewmr4_0597"/>
<dbReference type="HOGENOM" id="CLU_032616_0_0_6"/>
<dbReference type="GO" id="GO:0005524">
    <property type="term" value="F:ATP binding"/>
    <property type="evidence" value="ECO:0007669"/>
    <property type="project" value="UniProtKB-UniRule"/>
</dbReference>
<dbReference type="GO" id="GO:0052381">
    <property type="term" value="F:tRNA dimethylallyltransferase activity"/>
    <property type="evidence" value="ECO:0007669"/>
    <property type="project" value="UniProtKB-UniRule"/>
</dbReference>
<dbReference type="GO" id="GO:0006400">
    <property type="term" value="P:tRNA modification"/>
    <property type="evidence" value="ECO:0007669"/>
    <property type="project" value="TreeGrafter"/>
</dbReference>
<dbReference type="FunFam" id="1.10.20.140:FF:000001">
    <property type="entry name" value="tRNA dimethylallyltransferase"/>
    <property type="match status" value="1"/>
</dbReference>
<dbReference type="Gene3D" id="1.10.20.140">
    <property type="match status" value="1"/>
</dbReference>
<dbReference type="Gene3D" id="3.40.50.300">
    <property type="entry name" value="P-loop containing nucleotide triphosphate hydrolases"/>
    <property type="match status" value="1"/>
</dbReference>
<dbReference type="HAMAP" id="MF_00185">
    <property type="entry name" value="IPP_trans"/>
    <property type="match status" value="1"/>
</dbReference>
<dbReference type="InterPro" id="IPR039657">
    <property type="entry name" value="Dimethylallyltransferase"/>
</dbReference>
<dbReference type="InterPro" id="IPR018022">
    <property type="entry name" value="IPT"/>
</dbReference>
<dbReference type="InterPro" id="IPR027417">
    <property type="entry name" value="P-loop_NTPase"/>
</dbReference>
<dbReference type="NCBIfam" id="TIGR00174">
    <property type="entry name" value="miaA"/>
    <property type="match status" value="1"/>
</dbReference>
<dbReference type="PANTHER" id="PTHR11088">
    <property type="entry name" value="TRNA DIMETHYLALLYLTRANSFERASE"/>
    <property type="match status" value="1"/>
</dbReference>
<dbReference type="PANTHER" id="PTHR11088:SF60">
    <property type="entry name" value="TRNA DIMETHYLALLYLTRANSFERASE"/>
    <property type="match status" value="1"/>
</dbReference>
<dbReference type="Pfam" id="PF01715">
    <property type="entry name" value="IPPT"/>
    <property type="match status" value="1"/>
</dbReference>
<dbReference type="SUPFAM" id="SSF52540">
    <property type="entry name" value="P-loop containing nucleoside triphosphate hydrolases"/>
    <property type="match status" value="1"/>
</dbReference>
<sequence length="296" mass="33187">MGPTASGKTALALELAEKHNCEIISVDSALIYRGMDIGSAKPSAEELARGPHRLIDIRDPAESYSAADFRADALREIEQIISMGKTPVLVGGTMMYFKALLEGLSPLPSADEAIRADIQAEADANGWEALHEQLREIDPVSAERIHPNDPQRLSRAIEVYRISGKSLTELTQTKSAPLPYDVVQFAIAPRERKVLHELIGQRFRIMLEQGFIDEVAQLKARGDLHLDLPSMRCVGYRQCWQYLDGEFDYDTMVEKAVAATRQLAKRQLTWLRSWPELNWLESGAEGNLVTLMRQCR</sequence>
<feature type="chain" id="PRO_0000377319" description="tRNA dimethylallyltransferase">
    <location>
        <begin position="1"/>
        <end position="296"/>
    </location>
</feature>
<feature type="region of interest" description="Interaction with substrate tRNA" evidence="1">
    <location>
        <begin position="27"/>
        <end position="30"/>
    </location>
</feature>
<feature type="region of interest" description="Interaction with substrate tRNA" evidence="1">
    <location>
        <begin position="151"/>
        <end position="155"/>
    </location>
</feature>
<feature type="region of interest" description="Interaction with substrate tRNA" evidence="1">
    <location>
        <begin position="232"/>
        <end position="237"/>
    </location>
</feature>
<feature type="binding site" evidence="1">
    <location>
        <begin position="2"/>
        <end position="9"/>
    </location>
    <ligand>
        <name>ATP</name>
        <dbReference type="ChEBI" id="CHEBI:30616"/>
    </ligand>
</feature>
<feature type="binding site" evidence="1">
    <location>
        <begin position="4"/>
        <end position="9"/>
    </location>
    <ligand>
        <name>substrate</name>
    </ligand>
</feature>
<feature type="site" description="Interaction with substrate tRNA" evidence="1">
    <location>
        <position position="93"/>
    </location>
</feature>
<feature type="site" description="Interaction with substrate tRNA" evidence="1">
    <location>
        <position position="115"/>
    </location>
</feature>
<protein>
    <recommendedName>
        <fullName evidence="1">tRNA dimethylallyltransferase</fullName>
        <ecNumber evidence="1">2.5.1.75</ecNumber>
    </recommendedName>
    <alternativeName>
        <fullName evidence="1">Dimethylallyl diphosphate:tRNA dimethylallyltransferase</fullName>
        <shortName evidence="1">DMAPP:tRNA dimethylallyltransferase</shortName>
        <shortName evidence="1">DMATase</shortName>
    </alternativeName>
    <alternativeName>
        <fullName evidence="1">Isopentenyl-diphosphate:tRNA isopentenyltransferase</fullName>
        <shortName evidence="1">IPP transferase</shortName>
        <shortName evidence="1">IPPT</shortName>
        <shortName evidence="1">IPTase</shortName>
    </alternativeName>
</protein>
<evidence type="ECO:0000255" key="1">
    <source>
        <dbReference type="HAMAP-Rule" id="MF_00185"/>
    </source>
</evidence>
<reference key="1">
    <citation type="submission" date="2006-08" db="EMBL/GenBank/DDBJ databases">
        <title>Complete sequence of Shewanella sp. MR-4.</title>
        <authorList>
            <consortium name="US DOE Joint Genome Institute"/>
            <person name="Copeland A."/>
            <person name="Lucas S."/>
            <person name="Lapidus A."/>
            <person name="Barry K."/>
            <person name="Detter J.C."/>
            <person name="Glavina del Rio T."/>
            <person name="Hammon N."/>
            <person name="Israni S."/>
            <person name="Dalin E."/>
            <person name="Tice H."/>
            <person name="Pitluck S."/>
            <person name="Kiss H."/>
            <person name="Brettin T."/>
            <person name="Bruce D."/>
            <person name="Han C."/>
            <person name="Tapia R."/>
            <person name="Gilna P."/>
            <person name="Schmutz J."/>
            <person name="Larimer F."/>
            <person name="Land M."/>
            <person name="Hauser L."/>
            <person name="Kyrpides N."/>
            <person name="Mikhailova N."/>
            <person name="Nealson K."/>
            <person name="Konstantinidis K."/>
            <person name="Klappenbach J."/>
            <person name="Tiedje J."/>
            <person name="Richardson P."/>
        </authorList>
    </citation>
    <scope>NUCLEOTIDE SEQUENCE [LARGE SCALE GENOMIC DNA]</scope>
    <source>
        <strain>MR-4</strain>
    </source>
</reference>
<keyword id="KW-0067">ATP-binding</keyword>
<keyword id="KW-0460">Magnesium</keyword>
<keyword id="KW-0547">Nucleotide-binding</keyword>
<keyword id="KW-0808">Transferase</keyword>
<keyword id="KW-0819">tRNA processing</keyword>
<organism>
    <name type="scientific">Shewanella sp. (strain MR-4)</name>
    <dbReference type="NCBI Taxonomy" id="60480"/>
    <lineage>
        <taxon>Bacteria</taxon>
        <taxon>Pseudomonadati</taxon>
        <taxon>Pseudomonadota</taxon>
        <taxon>Gammaproteobacteria</taxon>
        <taxon>Alteromonadales</taxon>
        <taxon>Shewanellaceae</taxon>
        <taxon>Shewanella</taxon>
    </lineage>
</organism>
<accession>Q0HMP0</accession>
<comment type="function">
    <text evidence="1">Catalyzes the transfer of a dimethylallyl group onto the adenine at position 37 in tRNAs that read codons beginning with uridine, leading to the formation of N6-(dimethylallyl)adenosine (i(6)A).</text>
</comment>
<comment type="catalytic activity">
    <reaction evidence="1">
        <text>adenosine(37) in tRNA + dimethylallyl diphosphate = N(6)-dimethylallyladenosine(37) in tRNA + diphosphate</text>
        <dbReference type="Rhea" id="RHEA:26482"/>
        <dbReference type="Rhea" id="RHEA-COMP:10162"/>
        <dbReference type="Rhea" id="RHEA-COMP:10375"/>
        <dbReference type="ChEBI" id="CHEBI:33019"/>
        <dbReference type="ChEBI" id="CHEBI:57623"/>
        <dbReference type="ChEBI" id="CHEBI:74411"/>
        <dbReference type="ChEBI" id="CHEBI:74415"/>
        <dbReference type="EC" id="2.5.1.75"/>
    </reaction>
</comment>
<comment type="cofactor">
    <cofactor evidence="1">
        <name>Mg(2+)</name>
        <dbReference type="ChEBI" id="CHEBI:18420"/>
    </cofactor>
</comment>
<comment type="subunit">
    <text evidence="1">Monomer.</text>
</comment>
<comment type="similarity">
    <text evidence="1">Belongs to the IPP transferase family.</text>
</comment>
<proteinExistence type="inferred from homology"/>
<gene>
    <name evidence="1" type="primary">miaA</name>
    <name type="ordered locus">Shewmr4_0597</name>
</gene>